<evidence type="ECO:0000269" key="1">
    <source>
    </source>
</evidence>
<evidence type="ECO:0000269" key="2">
    <source>
    </source>
</evidence>
<evidence type="ECO:0000269" key="3">
    <source>
    </source>
</evidence>
<evidence type="ECO:0000269" key="4">
    <source>
    </source>
</evidence>
<evidence type="ECO:0000303" key="5">
    <source>
    </source>
</evidence>
<evidence type="ECO:0000303" key="6">
    <source>
    </source>
</evidence>
<evidence type="ECO:0000305" key="7">
    <source>
    </source>
</evidence>
<evidence type="ECO:0000305" key="8">
    <source>
    </source>
</evidence>
<evidence type="ECO:0000312" key="9">
    <source>
        <dbReference type="EMBL" id="CCP46129.1"/>
    </source>
</evidence>
<gene>
    <name evidence="5" type="primary">sapM</name>
    <name evidence="9" type="ordered locus">Rv3310</name>
</gene>
<name>SAPM_MYCTU</name>
<accession>O53361</accession>
<accession>F2GKY3</accession>
<accession>I6X6Y4</accession>
<accession>Q7D5Q7</accession>
<protein>
    <recommendedName>
        <fullName evidence="6">Phosphatidylinositol-3-phosphatase</fullName>
        <shortName evidence="6">PI3P phosphatase</shortName>
        <ecNumber evidence="2">3.1.3.64</ecNumber>
    </recommendedName>
    <alternativeName>
        <fullName evidence="5">Acid phosphatase SapM</fullName>
        <ecNumber evidence="1">3.1.3.2</ecNumber>
    </alternativeName>
    <alternativeName>
        <fullName evidence="5">Secreted acid phosphatase</fullName>
    </alternativeName>
</protein>
<proteinExistence type="evidence at protein level"/>
<organism>
    <name type="scientific">Mycobacterium tuberculosis (strain ATCC 25618 / H37Rv)</name>
    <dbReference type="NCBI Taxonomy" id="83332"/>
    <lineage>
        <taxon>Bacteria</taxon>
        <taxon>Bacillati</taxon>
        <taxon>Actinomycetota</taxon>
        <taxon>Actinomycetes</taxon>
        <taxon>Mycobacteriales</taxon>
        <taxon>Mycobacteriaceae</taxon>
        <taxon>Mycobacterium</taxon>
        <taxon>Mycobacterium tuberculosis complex</taxon>
    </lineage>
</organism>
<sequence length="299" mass="31807">MLRGIQALSRPLTRVYRALAVIGVLAASLLASWVGAVPQVGLAASALPTFAHVVIVVEENRSQAAIIGNKSAPFINSLAANGAMMAQAFAETHPSEPNYLALFAGNTFGLTKNTCPVNGGALPNLGSELLSAGYTFMGFAEDLPAVGSTVCSAGKYARKHVPWVNFSNVPTTLSVPFSAFPKPQNYPGLPTVSFVIPNADNDMHDGSIAQGDAWLNRHLSAYANWAKTNNSLLVVTWDEDDGSSRNQIPTVFYGAHVRPGTYNETISHYNVLSTLEQIYGLPKTGYATNAPPITDIWGD</sequence>
<dbReference type="EC" id="3.1.3.64" evidence="2"/>
<dbReference type="EC" id="3.1.3.2" evidence="1"/>
<dbReference type="EMBL" id="AL123456">
    <property type="protein sequence ID" value="CCP46129.1"/>
    <property type="molecule type" value="Genomic_DNA"/>
</dbReference>
<dbReference type="RefSeq" id="NP_217827.1">
    <property type="nucleotide sequence ID" value="NC_000962.3"/>
</dbReference>
<dbReference type="RefSeq" id="WP_003900013.1">
    <property type="nucleotide sequence ID" value="NZ_NVQJ01000003.1"/>
</dbReference>
<dbReference type="SMR" id="O53361"/>
<dbReference type="FunCoup" id="O53361">
    <property type="interactions" value="8"/>
</dbReference>
<dbReference type="STRING" id="83332.Rv3310"/>
<dbReference type="PaxDb" id="83332-Rv3310"/>
<dbReference type="DNASU" id="887988"/>
<dbReference type="GeneID" id="887988"/>
<dbReference type="KEGG" id="mtu:Rv3310"/>
<dbReference type="KEGG" id="mtv:RVBD_3310"/>
<dbReference type="PATRIC" id="fig|83332.111.peg.3693"/>
<dbReference type="TubercuList" id="Rv3310"/>
<dbReference type="eggNOG" id="COG3511">
    <property type="taxonomic scope" value="Bacteria"/>
</dbReference>
<dbReference type="HOGENOM" id="CLU_027977_3_0_11"/>
<dbReference type="InParanoid" id="O53361"/>
<dbReference type="OrthoDB" id="345880at2"/>
<dbReference type="Reactome" id="R-HSA-9636383">
    <property type="pathway name" value="Prevention of phagosomal-lysosomal fusion"/>
</dbReference>
<dbReference type="Reactome" id="R-HSA-9636569">
    <property type="pathway name" value="Suppression of autophagy"/>
</dbReference>
<dbReference type="Proteomes" id="UP000001584">
    <property type="component" value="Chromosome"/>
</dbReference>
<dbReference type="GO" id="GO:0005737">
    <property type="term" value="C:cytoplasm"/>
    <property type="evidence" value="ECO:0000304"/>
    <property type="project" value="Reactome"/>
</dbReference>
<dbReference type="GO" id="GO:0005829">
    <property type="term" value="C:cytosol"/>
    <property type="evidence" value="ECO:0000304"/>
    <property type="project" value="Reactome"/>
</dbReference>
<dbReference type="GO" id="GO:0005576">
    <property type="term" value="C:extracellular region"/>
    <property type="evidence" value="ECO:0000314"/>
    <property type="project" value="MTBBASE"/>
</dbReference>
<dbReference type="GO" id="GO:0044161">
    <property type="term" value="C:host cell cytoplasmic vesicle"/>
    <property type="evidence" value="ECO:0007669"/>
    <property type="project" value="UniProtKB-SubCell"/>
</dbReference>
<dbReference type="GO" id="GO:0009274">
    <property type="term" value="C:peptidoglycan-based cell wall"/>
    <property type="evidence" value="ECO:0000314"/>
    <property type="project" value="MTBBASE"/>
</dbReference>
<dbReference type="GO" id="GO:0003993">
    <property type="term" value="F:acid phosphatase activity"/>
    <property type="evidence" value="ECO:0000314"/>
    <property type="project" value="MTBBASE"/>
</dbReference>
<dbReference type="GO" id="GO:0016791">
    <property type="term" value="F:phosphatase activity"/>
    <property type="evidence" value="ECO:0000304"/>
    <property type="project" value="Reactome"/>
</dbReference>
<dbReference type="GO" id="GO:0004438">
    <property type="term" value="F:phosphatidylinositol-3-phosphate phosphatase activity"/>
    <property type="evidence" value="ECO:0000314"/>
    <property type="project" value="MTBBASE"/>
</dbReference>
<dbReference type="GO" id="GO:0050189">
    <property type="term" value="F:phosphoenolpyruvate phosphatase activity"/>
    <property type="evidence" value="ECO:0000314"/>
    <property type="project" value="MTBBASE"/>
</dbReference>
<dbReference type="GO" id="GO:0050192">
    <property type="term" value="F:phosphoglycerate phosphatase activity"/>
    <property type="evidence" value="ECO:0000314"/>
    <property type="project" value="MTBBASE"/>
</dbReference>
<dbReference type="GO" id="GO:0004805">
    <property type="term" value="F:trehalose-phosphatase activity"/>
    <property type="evidence" value="ECO:0000314"/>
    <property type="project" value="MTBBASE"/>
</dbReference>
<dbReference type="GO" id="GO:0006742">
    <property type="term" value="P:NADP catabolic process"/>
    <property type="evidence" value="ECO:0000314"/>
    <property type="project" value="MTBBASE"/>
</dbReference>
<dbReference type="GO" id="GO:0046854">
    <property type="term" value="P:phosphatidylinositol phosphate biosynthetic process"/>
    <property type="evidence" value="ECO:0000314"/>
    <property type="project" value="MTBBASE"/>
</dbReference>
<dbReference type="GO" id="GO:0052170">
    <property type="term" value="P:symbiont-mediated suppression of host innate immune response"/>
    <property type="evidence" value="ECO:0000304"/>
    <property type="project" value="Reactome"/>
</dbReference>
<dbReference type="Gene3D" id="3.40.720.10">
    <property type="entry name" value="Alkaline Phosphatase, subunit A"/>
    <property type="match status" value="1"/>
</dbReference>
<dbReference type="InterPro" id="IPR017850">
    <property type="entry name" value="Alkaline_phosphatase_core_sf"/>
</dbReference>
<dbReference type="InterPro" id="IPR007312">
    <property type="entry name" value="Phosphoesterase"/>
</dbReference>
<dbReference type="PANTHER" id="PTHR31956:SF1">
    <property type="entry name" value="NON-SPECIFIC PHOSPHOLIPASE C1"/>
    <property type="match status" value="1"/>
</dbReference>
<dbReference type="PANTHER" id="PTHR31956">
    <property type="entry name" value="NON-SPECIFIC PHOSPHOLIPASE C4-RELATED"/>
    <property type="match status" value="1"/>
</dbReference>
<dbReference type="Pfam" id="PF04185">
    <property type="entry name" value="Phosphoesterase"/>
    <property type="match status" value="1"/>
</dbReference>
<dbReference type="SUPFAM" id="SSF53649">
    <property type="entry name" value="Alkaline phosphatase-like"/>
    <property type="match status" value="1"/>
</dbReference>
<comment type="function">
    <text evidence="1 2 3 4">Virulence factor that plays an important role in blocking phagosome-lysosome fusion and thus participates in the intracellular survival of the pathogen (PubMed:15753315, PubMed:23923000). Acts as a phosphatase that dephosphorylates phosphatidylinositol 3-phosphate (PI3P), a membrane trafficking regulatory lipid essential for phagosomal acquisition of lysosomal constituents (PubMed:15753315). Therefore, SapM eliminates PI3P from the phagosomal membrane by catalyzing its hydrolysis, and thus contributes to inhibition of phagosome maturation (PubMed:15753315). Also interferes with autophagy: SapM blocks autophagosome-lysosome fusion in macrophages by binding to the small GTPase RAB7, which prevents RAB7 from being involved in this process and thus negatively regulates autophagy flux (PubMed:25896765). In vitro, displays phosphatase activity with broad specificity; can dephosphorylate a variety of phosphoester substrates, with the highest activity against phosphoenolpyruvate, glycerophosphate, GTP, NADPH, phosphotyrosine and trehalose-6-phosphate (PubMed:11073936). In contrast, the enzyme exhibits poor activity against glucose-6-phosphate, phosphothreonine, and a number of nucleotides (NADP, ATP, AMP, and GMP) (PubMed:11073936).</text>
</comment>
<comment type="catalytic activity">
    <reaction evidence="1">
        <text>a phosphate monoester + H2O = an alcohol + phosphate</text>
        <dbReference type="Rhea" id="RHEA:15017"/>
        <dbReference type="ChEBI" id="CHEBI:15377"/>
        <dbReference type="ChEBI" id="CHEBI:30879"/>
        <dbReference type="ChEBI" id="CHEBI:43474"/>
        <dbReference type="ChEBI" id="CHEBI:67140"/>
        <dbReference type="EC" id="3.1.3.2"/>
    </reaction>
</comment>
<comment type="catalytic activity">
    <reaction evidence="2">
        <text>a 1,2-diacyl-sn-glycero-3-phospho-(1D-myo-inositol-3-phosphate) + H2O = a 1,2-diacyl-sn-glycero-3-phospho-(1D-myo-inositol) + phosphate</text>
        <dbReference type="Rhea" id="RHEA:12316"/>
        <dbReference type="ChEBI" id="CHEBI:15377"/>
        <dbReference type="ChEBI" id="CHEBI:43474"/>
        <dbReference type="ChEBI" id="CHEBI:57880"/>
        <dbReference type="ChEBI" id="CHEBI:58088"/>
        <dbReference type="EC" id="3.1.3.64"/>
    </reaction>
</comment>
<comment type="cofactor">
    <cofactor evidence="7">
        <name>a metal cation</name>
        <dbReference type="ChEBI" id="CHEBI:25213"/>
    </cofactor>
</comment>
<comment type="activity regulation">
    <text evidence="1">Phosphatase activity is inhibited in vitro by low concentrations of several heavy metals (zinc chloride, sodium molybdate, magnesium chloride, and copper sulfate) and moderately high concentrations (&gt;8 mM) of EDTA.</text>
</comment>
<comment type="biophysicochemical properties">
    <kinetics>
        <KM evidence="1">0.43 mM for p-nitrophenyl phosphate</KM>
        <Vmax evidence="1">2100000.0 nmol/h/mg enzyme with p-nitrophenyl phosphate as substrate</Vmax>
    </kinetics>
    <phDependence>
        <text evidence="1">Optimum pH is 6.5-7.5. Significant phosphatase activity is observed between pH 5.5 and 8.0.</text>
    </phDependence>
</comment>
<comment type="subunit">
    <text evidence="1 4">Monomer (PubMed:11073936). SapM interacts with host RAB7 via its C-terminus (PubMed:25896765).</text>
</comment>
<comment type="subcellular location">
    <subcellularLocation>
        <location evidence="1 2">Secreted</location>
    </subcellularLocation>
    <subcellularLocation>
        <location evidence="8">Host cytoplasmic vesicle</location>
        <location evidence="8">Host phagosome</location>
    </subcellularLocation>
    <text evidence="8">It remains to be determined how SapM, once secreted into the phagosomal lumen, gains access to PI3P within the cytofacial membrane leaflet. It is possible that SapM is exported to the cytosolic side, or alternatively there may be a mechanism for PI3P presentation to SapM remaining on the luminal side.</text>
</comment>
<comment type="domain">
    <text evidence="4">The C-terminus of SapM is required for interaction with RAB7 and SapM-mediated autophagy block.</text>
</comment>
<comment type="disruption phenotype">
    <text evidence="3">Strain lacking this gene is defective in the arrest of phagosomal maturation as well as for growth in human THP-1 macrophages. The mutant strain is severely attenuated for growth in the lungs and spleen of guinea pigs and has a significantly reduced ability to cause pathological damage in the host when compared with the parental strain. Also, the guinea pigs infected with the mutant strain exhibit a significantly enhanced survival when compared with M.tuberculosis infected animals.</text>
</comment>
<reference key="1">
    <citation type="journal article" date="1998" name="Nature">
        <title>Deciphering the biology of Mycobacterium tuberculosis from the complete genome sequence.</title>
        <authorList>
            <person name="Cole S.T."/>
            <person name="Brosch R."/>
            <person name="Parkhill J."/>
            <person name="Garnier T."/>
            <person name="Churcher C.M."/>
            <person name="Harris D.E."/>
            <person name="Gordon S.V."/>
            <person name="Eiglmeier K."/>
            <person name="Gas S."/>
            <person name="Barry C.E. III"/>
            <person name="Tekaia F."/>
            <person name="Badcock K."/>
            <person name="Basham D."/>
            <person name="Brown D."/>
            <person name="Chillingworth T."/>
            <person name="Connor R."/>
            <person name="Davies R.M."/>
            <person name="Devlin K."/>
            <person name="Feltwell T."/>
            <person name="Gentles S."/>
            <person name="Hamlin N."/>
            <person name="Holroyd S."/>
            <person name="Hornsby T."/>
            <person name="Jagels K."/>
            <person name="Krogh A."/>
            <person name="McLean J."/>
            <person name="Moule S."/>
            <person name="Murphy L.D."/>
            <person name="Oliver S."/>
            <person name="Osborne J."/>
            <person name="Quail M.A."/>
            <person name="Rajandream M.A."/>
            <person name="Rogers J."/>
            <person name="Rutter S."/>
            <person name="Seeger K."/>
            <person name="Skelton S."/>
            <person name="Squares S."/>
            <person name="Squares R."/>
            <person name="Sulston J.E."/>
            <person name="Taylor K."/>
            <person name="Whitehead S."/>
            <person name="Barrell B.G."/>
        </authorList>
    </citation>
    <scope>NUCLEOTIDE SEQUENCE [LARGE SCALE GENOMIC DNA]</scope>
    <source>
        <strain>ATCC 25618 / H37Rv</strain>
    </source>
</reference>
<reference key="2">
    <citation type="journal article" date="2000" name="J. Bacteriol.">
        <title>Secretion of an acid phosphatase (SapM) by Mycobacterium tuberculosis that is similar to eukaryotic acid phosphatases.</title>
        <authorList>
            <person name="Saleh M.T."/>
            <person name="Belisle J.T."/>
        </authorList>
    </citation>
    <scope>PROTEIN SEQUENCE OF 44-55</scope>
    <scope>IDENTIFICATION BY MASS SPECTROMETRY</scope>
    <scope>FUNCTION</scope>
    <scope>CATALYTIC ACTIVITY</scope>
    <scope>BIOPHYSICOCHEMICAL PROPERTIES</scope>
    <scope>SUBSTRATE SPECIFICITY</scope>
    <scope>COFACTOR</scope>
    <scope>ACTIVITY REGULATION</scope>
    <scope>SUBCELLULAR LOCATION</scope>
    <scope>SUBUNIT</scope>
</reference>
<reference key="3">
    <citation type="journal article" date="2005" name="Proc. Natl. Acad. Sci. U.S.A.">
        <title>Mechanism of phagolysosome biogenesis block by viable Mycobacterium tuberculosis.</title>
        <authorList>
            <person name="Vergne I."/>
            <person name="Chua J."/>
            <person name="Lee H.H."/>
            <person name="Lucas M."/>
            <person name="Belisle J."/>
            <person name="Deretic V."/>
        </authorList>
    </citation>
    <scope>FUNCTION</scope>
    <scope>CATALYTIC ACTIVITY</scope>
    <scope>SUBCELLULAR LOCATION</scope>
    <source>
        <strain>H37Rv</strain>
    </source>
</reference>
<reference key="4">
    <citation type="journal article" date="2011" name="Mol. Cell. Proteomics">
        <title>Proteogenomic analysis of Mycobacterium tuberculosis by high resolution mass spectrometry.</title>
        <authorList>
            <person name="Kelkar D.S."/>
            <person name="Kumar D."/>
            <person name="Kumar P."/>
            <person name="Balakrishnan L."/>
            <person name="Muthusamy B."/>
            <person name="Yadav A.K."/>
            <person name="Shrivastava P."/>
            <person name="Marimuthu A."/>
            <person name="Anand S."/>
            <person name="Sundaram H."/>
            <person name="Kingsbury R."/>
            <person name="Harsha H.C."/>
            <person name="Nair B."/>
            <person name="Prasad T.S."/>
            <person name="Chauhan D.S."/>
            <person name="Katoch K."/>
            <person name="Katoch V.M."/>
            <person name="Kumar P."/>
            <person name="Chaerkady R."/>
            <person name="Ramachandran S."/>
            <person name="Dash D."/>
            <person name="Pandey A."/>
        </authorList>
    </citation>
    <scope>IDENTIFICATION BY MASS SPECTROMETRY [LARGE SCALE ANALYSIS]</scope>
    <source>
        <strain>ATCC 25618 / H37Rv</strain>
    </source>
</reference>
<reference key="5">
    <citation type="journal article" date="2013" name="PLoS ONE">
        <title>Secreted acid phosphatase (SapM) of Mycobacterium tuberculosis is indispensable for arresting phagosomal maturation and growth of the pathogen in guinea pig tissues.</title>
        <authorList>
            <person name="Puri R.V."/>
            <person name="Reddy P.V."/>
            <person name="Tyagi A.K."/>
        </authorList>
    </citation>
    <scope>FUNCTION</scope>
    <scope>DISRUPTION PHENOTYPE</scope>
    <source>
        <strain>ATCC 35801 / TMC 107 / Erdman</strain>
    </source>
</reference>
<reference key="6">
    <citation type="journal article" date="2015" name="Biochem. Biophys. Res. Commun.">
        <title>Autophagy regulation revealed by SapM-induced block of autophagosome-lysosome fusion via binding RAB7.</title>
        <authorList>
            <person name="Hu D."/>
            <person name="Wu J."/>
            <person name="Wang W."/>
            <person name="Mu M."/>
            <person name="Zhao R."/>
            <person name="Xu X."/>
            <person name="Chen Z."/>
            <person name="Xiao J."/>
            <person name="Hu F."/>
            <person name="Yang Y."/>
            <person name="Zhang R."/>
        </authorList>
    </citation>
    <scope>FUNCTION</scope>
    <scope>INTERACTION WITH RAB7</scope>
    <scope>DOMAIN</scope>
</reference>
<keyword id="KW-0903">Direct protein sequencing</keyword>
<keyword id="KW-1036">Host cytoplasmic vesicle</keyword>
<keyword id="KW-0378">Hydrolase</keyword>
<keyword id="KW-1185">Reference proteome</keyword>
<keyword id="KW-0964">Secreted</keyword>
<keyword id="KW-0732">Signal</keyword>
<keyword id="KW-0843">Virulence</keyword>
<feature type="signal peptide" evidence="1">
    <location>
        <begin position="1"/>
        <end position="43"/>
    </location>
</feature>
<feature type="chain" id="PRO_5008778597" description="Phosphatidylinositol-3-phosphatase">
    <location>
        <begin position="44"/>
        <end position="299"/>
    </location>
</feature>